<proteinExistence type="inferred from homology"/>
<evidence type="ECO:0000250" key="1"/>
<evidence type="ECO:0000255" key="2">
    <source>
        <dbReference type="PROSITE-ProRule" id="PRU10013"/>
    </source>
</evidence>
<evidence type="ECO:0000305" key="3"/>
<dbReference type="EC" id="1.11.1.6"/>
<dbReference type="EMBL" id="Z37106">
    <property type="protein sequence ID" value="CAA85470.1"/>
    <property type="molecule type" value="Genomic_DNA"/>
</dbReference>
<dbReference type="SMR" id="P55312"/>
<dbReference type="IntAct" id="P55312">
    <property type="interactions" value="1"/>
</dbReference>
<dbReference type="STRING" id="4113.P55312"/>
<dbReference type="PaxDb" id="4113-PGSC0003DMT400075611"/>
<dbReference type="ProMEX" id="P55312"/>
<dbReference type="eggNOG" id="KOG0047">
    <property type="taxonomic scope" value="Eukaryota"/>
</dbReference>
<dbReference type="InParanoid" id="P55312"/>
<dbReference type="OrthoDB" id="6880011at2759"/>
<dbReference type="Proteomes" id="UP000011115">
    <property type="component" value="Unassembled WGS sequence"/>
</dbReference>
<dbReference type="ExpressionAtlas" id="P55312">
    <property type="expression patterns" value="baseline"/>
</dbReference>
<dbReference type="GO" id="GO:0005737">
    <property type="term" value="C:cytoplasm"/>
    <property type="evidence" value="ECO:0000318"/>
    <property type="project" value="GO_Central"/>
</dbReference>
<dbReference type="GO" id="GO:0009514">
    <property type="term" value="C:glyoxysome"/>
    <property type="evidence" value="ECO:0007669"/>
    <property type="project" value="UniProtKB-SubCell"/>
</dbReference>
<dbReference type="GO" id="GO:0005777">
    <property type="term" value="C:peroxisome"/>
    <property type="evidence" value="ECO:0000318"/>
    <property type="project" value="GO_Central"/>
</dbReference>
<dbReference type="GO" id="GO:0005886">
    <property type="term" value="C:plasma membrane"/>
    <property type="evidence" value="ECO:0000318"/>
    <property type="project" value="GO_Central"/>
</dbReference>
<dbReference type="GO" id="GO:0004096">
    <property type="term" value="F:catalase activity"/>
    <property type="evidence" value="ECO:0000318"/>
    <property type="project" value="GO_Central"/>
</dbReference>
<dbReference type="GO" id="GO:0020037">
    <property type="term" value="F:heme binding"/>
    <property type="evidence" value="ECO:0000318"/>
    <property type="project" value="GO_Central"/>
</dbReference>
<dbReference type="GO" id="GO:0046872">
    <property type="term" value="F:metal ion binding"/>
    <property type="evidence" value="ECO:0007669"/>
    <property type="project" value="UniProtKB-KW"/>
</dbReference>
<dbReference type="GO" id="GO:0042744">
    <property type="term" value="P:hydrogen peroxide catabolic process"/>
    <property type="evidence" value="ECO:0000318"/>
    <property type="project" value="GO_Central"/>
</dbReference>
<dbReference type="GO" id="GO:0042542">
    <property type="term" value="P:response to hydrogen peroxide"/>
    <property type="evidence" value="ECO:0000318"/>
    <property type="project" value="GO_Central"/>
</dbReference>
<dbReference type="CDD" id="cd08154">
    <property type="entry name" value="catalase_clade_1"/>
    <property type="match status" value="1"/>
</dbReference>
<dbReference type="FunFam" id="2.40.180.10:FF:000002">
    <property type="entry name" value="Catalase"/>
    <property type="match status" value="1"/>
</dbReference>
<dbReference type="Gene3D" id="2.40.180.10">
    <property type="entry name" value="Catalase core domain"/>
    <property type="match status" value="1"/>
</dbReference>
<dbReference type="InterPro" id="IPR018028">
    <property type="entry name" value="Catalase"/>
</dbReference>
<dbReference type="InterPro" id="IPR024708">
    <property type="entry name" value="Catalase_AS"/>
</dbReference>
<dbReference type="InterPro" id="IPR024711">
    <property type="entry name" value="Catalase_clade1/3"/>
</dbReference>
<dbReference type="InterPro" id="IPR011614">
    <property type="entry name" value="Catalase_core"/>
</dbReference>
<dbReference type="InterPro" id="IPR002226">
    <property type="entry name" value="Catalase_haem_BS"/>
</dbReference>
<dbReference type="InterPro" id="IPR010582">
    <property type="entry name" value="Catalase_immune_responsive"/>
</dbReference>
<dbReference type="InterPro" id="IPR020835">
    <property type="entry name" value="Catalase_sf"/>
</dbReference>
<dbReference type="PANTHER" id="PTHR11465">
    <property type="entry name" value="CATALASE"/>
    <property type="match status" value="1"/>
</dbReference>
<dbReference type="PANTHER" id="PTHR11465:SF64">
    <property type="entry name" value="CATALASE ISOZYME 1"/>
    <property type="match status" value="1"/>
</dbReference>
<dbReference type="Pfam" id="PF00199">
    <property type="entry name" value="Catalase"/>
    <property type="match status" value="1"/>
</dbReference>
<dbReference type="Pfam" id="PF06628">
    <property type="entry name" value="Catalase-rel"/>
    <property type="match status" value="1"/>
</dbReference>
<dbReference type="PIRSF" id="PIRSF038928">
    <property type="entry name" value="Catalase_clade1-3"/>
    <property type="match status" value="1"/>
</dbReference>
<dbReference type="PRINTS" id="PR00067">
    <property type="entry name" value="CATALASE"/>
</dbReference>
<dbReference type="SMART" id="SM01060">
    <property type="entry name" value="Catalase"/>
    <property type="match status" value="1"/>
</dbReference>
<dbReference type="SUPFAM" id="SSF56634">
    <property type="entry name" value="Heme-dependent catalase-like"/>
    <property type="match status" value="1"/>
</dbReference>
<dbReference type="PROSITE" id="PS00437">
    <property type="entry name" value="CATALASE_1"/>
    <property type="match status" value="1"/>
</dbReference>
<dbReference type="PROSITE" id="PS00438">
    <property type="entry name" value="CATALASE_2"/>
    <property type="match status" value="1"/>
</dbReference>
<dbReference type="PROSITE" id="PS51402">
    <property type="entry name" value="CATALASE_3"/>
    <property type="match status" value="1"/>
</dbReference>
<reference key="1">
    <citation type="journal article" date="1995" name="Mol. Plant Microbe Interact.">
        <title>Characterization of a pathogen-induced potato catalase and its systemic expression upon nematode and bacterial infection.</title>
        <authorList>
            <person name="Niebel A."/>
            <person name="Heungens K."/>
            <person name="Barthels N."/>
            <person name="Inze D."/>
            <person name="van Montagu M."/>
            <person name="Gheysen G."/>
        </authorList>
    </citation>
    <scope>NUCLEOTIDE SEQUENCE [GENOMIC DNA] OF 2-492</scope>
    <source>
        <strain>cv. Datura</strain>
        <tissue>Leaf</tissue>
    </source>
</reference>
<protein>
    <recommendedName>
        <fullName>Catalase isozyme 2</fullName>
        <ecNumber>1.11.1.6</ecNumber>
    </recommendedName>
</protein>
<keyword id="KW-0330">Glyoxysome</keyword>
<keyword id="KW-0349">Heme</keyword>
<keyword id="KW-0376">Hydrogen peroxide</keyword>
<keyword id="KW-0408">Iron</keyword>
<keyword id="KW-0479">Metal-binding</keyword>
<keyword id="KW-0560">Oxidoreductase</keyword>
<keyword id="KW-0575">Peroxidase</keyword>
<keyword id="KW-0576">Peroxisome</keyword>
<keyword id="KW-1185">Reference proteome</keyword>
<feature type="chain" id="PRO_0000084962" description="Catalase isozyme 2">
    <location>
        <begin position="1"/>
        <end position="492"/>
    </location>
</feature>
<feature type="active site" evidence="2">
    <location>
        <position position="65"/>
    </location>
</feature>
<feature type="active site" evidence="2">
    <location>
        <position position="138"/>
    </location>
</feature>
<feature type="binding site" description="axial binding residue" evidence="1">
    <location>
        <position position="348"/>
    </location>
    <ligand>
        <name>heme</name>
        <dbReference type="ChEBI" id="CHEBI:30413"/>
    </ligand>
    <ligandPart>
        <name>Fe</name>
        <dbReference type="ChEBI" id="CHEBI:18248"/>
    </ligandPart>
</feature>
<organism>
    <name type="scientific">Solanum tuberosum</name>
    <name type="common">Potato</name>
    <dbReference type="NCBI Taxonomy" id="4113"/>
    <lineage>
        <taxon>Eukaryota</taxon>
        <taxon>Viridiplantae</taxon>
        <taxon>Streptophyta</taxon>
        <taxon>Embryophyta</taxon>
        <taxon>Tracheophyta</taxon>
        <taxon>Spermatophyta</taxon>
        <taxon>Magnoliopsida</taxon>
        <taxon>eudicotyledons</taxon>
        <taxon>Gunneridae</taxon>
        <taxon>Pentapetalae</taxon>
        <taxon>asterids</taxon>
        <taxon>lamiids</taxon>
        <taxon>Solanales</taxon>
        <taxon>Solanaceae</taxon>
        <taxon>Solanoideae</taxon>
        <taxon>Solaneae</taxon>
        <taxon>Solanum</taxon>
    </lineage>
</organism>
<gene>
    <name type="primary">CAT2</name>
</gene>
<sequence>MDPSKYRPSSAYDTPFLTTNAGGPVYNNVSSLTVGPRGPVLLEDYYLIEKLATFDREKIPERVVHARGASAKGFFEVTHDISHLTCADFLRAPGAQTPVICRFSTVVHERGSPESIRDIRGFAVKFYTREGNFDLVGNNVPVFFNRDAKSFPDTIRALKPNPKSHIQENWRILDFFSFLPESLHTFAFFYDDVCLPTDYRHMEGFGVHAYQLINKEGKAHYVKFHWKPTCGVKSMSEEEAIRVGGTNHSHATKDLYDSIAAGNYPEWKLFIQTMDPEDVDKFDFDPLDVTKTWPEDLLPLIPVGRLVLNRNIDNFFAENEQLAFNPGHIVPGIYYSEDKLLQTRIFAYADTQRHRIGPNYMQLPVNAPKCGHHNNHRDGAMNMTHRDEEVDYLPSRFDPCRPAEQYPIPACVLNGRRTNCVIPKENNFKQAGERYRSWESDRQDRYITKWVESLSDPRVTHEIRSIWISYLSQADKSCGQKVASRLTVKPTM</sequence>
<name>CATA2_SOLTU</name>
<comment type="function">
    <text>Occurs in almost all aerobically respiring organisms and serves to protect cells from the toxic effects of hydrogen peroxide.</text>
</comment>
<comment type="catalytic activity">
    <reaction evidence="2">
        <text>2 H2O2 = O2 + 2 H2O</text>
        <dbReference type="Rhea" id="RHEA:20309"/>
        <dbReference type="ChEBI" id="CHEBI:15377"/>
        <dbReference type="ChEBI" id="CHEBI:15379"/>
        <dbReference type="ChEBI" id="CHEBI:16240"/>
        <dbReference type="EC" id="1.11.1.6"/>
    </reaction>
</comment>
<comment type="cofactor">
    <cofactor>
        <name>heme</name>
        <dbReference type="ChEBI" id="CHEBI:30413"/>
    </cofactor>
</comment>
<comment type="subunit">
    <text evidence="1">Homotetramer.</text>
</comment>
<comment type="subcellular location">
    <subcellularLocation>
        <location evidence="1">Peroxisome</location>
    </subcellularLocation>
    <subcellularLocation>
        <location evidence="1">Glyoxysome</location>
    </subcellularLocation>
</comment>
<comment type="similarity">
    <text evidence="3">Belongs to the catalase family.</text>
</comment>
<accession>P55312</accession>